<protein>
    <recommendedName>
        <fullName evidence="1">Small ribosomal subunit protein uS2c</fullName>
    </recommendedName>
    <alternativeName>
        <fullName>30S ribosomal protein S2, chloroplastic</fullName>
    </alternativeName>
</protein>
<name>RR2_CITSI</name>
<feature type="chain" id="PRO_0000352102" description="Small ribosomal subunit protein uS2c">
    <location>
        <begin position="1"/>
        <end position="236"/>
    </location>
</feature>
<accession>Q09MI9</accession>
<reference key="1">
    <citation type="journal article" date="2006" name="BMC Plant Biol.">
        <title>The complete chloroplast genome sequence of Citrus sinensis (L.) Osbeck var 'Ridge Pineapple': organization and phylogenetic relationships to other angiosperms.</title>
        <authorList>
            <person name="Bausher M.G."/>
            <person name="Singh N.D."/>
            <person name="Lee S.-B."/>
            <person name="Jansen R.K."/>
            <person name="Daniell H."/>
        </authorList>
    </citation>
    <scope>NUCLEOTIDE SEQUENCE [LARGE SCALE GENOMIC DNA]</scope>
    <source>
        <strain>cv. Osbeck var. Ridge Pineapple</strain>
    </source>
</reference>
<evidence type="ECO:0000305" key="1"/>
<proteinExistence type="inferred from homology"/>
<keyword id="KW-0150">Chloroplast</keyword>
<keyword id="KW-0934">Plastid</keyword>
<keyword id="KW-0687">Ribonucleoprotein</keyword>
<keyword id="KW-0689">Ribosomal protein</keyword>
<dbReference type="EMBL" id="DQ864733">
    <property type="protein sequence ID" value="ABI49009.1"/>
    <property type="molecule type" value="Genomic_DNA"/>
</dbReference>
<dbReference type="RefSeq" id="YP_740464.1">
    <property type="nucleotide sequence ID" value="NC_008334.1"/>
</dbReference>
<dbReference type="SMR" id="Q09MI9"/>
<dbReference type="GeneID" id="4271232"/>
<dbReference type="KEGG" id="cit:4271232"/>
<dbReference type="OrthoDB" id="617163at71240"/>
<dbReference type="GO" id="GO:0009507">
    <property type="term" value="C:chloroplast"/>
    <property type="evidence" value="ECO:0007669"/>
    <property type="project" value="UniProtKB-SubCell"/>
</dbReference>
<dbReference type="GO" id="GO:0015935">
    <property type="term" value="C:small ribosomal subunit"/>
    <property type="evidence" value="ECO:0007669"/>
    <property type="project" value="InterPro"/>
</dbReference>
<dbReference type="GO" id="GO:0003735">
    <property type="term" value="F:structural constituent of ribosome"/>
    <property type="evidence" value="ECO:0007669"/>
    <property type="project" value="InterPro"/>
</dbReference>
<dbReference type="GO" id="GO:0006412">
    <property type="term" value="P:translation"/>
    <property type="evidence" value="ECO:0007669"/>
    <property type="project" value="UniProtKB-UniRule"/>
</dbReference>
<dbReference type="CDD" id="cd01425">
    <property type="entry name" value="RPS2"/>
    <property type="match status" value="1"/>
</dbReference>
<dbReference type="FunFam" id="3.40.50.10490:FF:000101">
    <property type="match status" value="1"/>
</dbReference>
<dbReference type="FunFam" id="1.10.287.610:FF:000001">
    <property type="entry name" value="30S ribosomal protein S2"/>
    <property type="match status" value="1"/>
</dbReference>
<dbReference type="Gene3D" id="3.40.50.10490">
    <property type="entry name" value="Glucose-6-phosphate isomerase like protein, domain 1"/>
    <property type="match status" value="1"/>
</dbReference>
<dbReference type="Gene3D" id="1.10.287.610">
    <property type="entry name" value="Helix hairpin bin"/>
    <property type="match status" value="1"/>
</dbReference>
<dbReference type="HAMAP" id="MF_00291_B">
    <property type="entry name" value="Ribosomal_uS2_B"/>
    <property type="match status" value="1"/>
</dbReference>
<dbReference type="InterPro" id="IPR001865">
    <property type="entry name" value="Ribosomal_uS2"/>
</dbReference>
<dbReference type="InterPro" id="IPR005706">
    <property type="entry name" value="Ribosomal_uS2_bac/mit/plastid"/>
</dbReference>
<dbReference type="InterPro" id="IPR018130">
    <property type="entry name" value="Ribosomal_uS2_CS"/>
</dbReference>
<dbReference type="InterPro" id="IPR023591">
    <property type="entry name" value="Ribosomal_uS2_flav_dom_sf"/>
</dbReference>
<dbReference type="NCBIfam" id="TIGR01011">
    <property type="entry name" value="rpsB_bact"/>
    <property type="match status" value="1"/>
</dbReference>
<dbReference type="PANTHER" id="PTHR12534">
    <property type="entry name" value="30S RIBOSOMAL PROTEIN S2 PROKARYOTIC AND ORGANELLAR"/>
    <property type="match status" value="1"/>
</dbReference>
<dbReference type="PANTHER" id="PTHR12534:SF0">
    <property type="entry name" value="SMALL RIBOSOMAL SUBUNIT PROTEIN US2M"/>
    <property type="match status" value="1"/>
</dbReference>
<dbReference type="Pfam" id="PF00318">
    <property type="entry name" value="Ribosomal_S2"/>
    <property type="match status" value="1"/>
</dbReference>
<dbReference type="PRINTS" id="PR00395">
    <property type="entry name" value="RIBOSOMALS2"/>
</dbReference>
<dbReference type="SUPFAM" id="SSF52313">
    <property type="entry name" value="Ribosomal protein S2"/>
    <property type="match status" value="1"/>
</dbReference>
<dbReference type="PROSITE" id="PS00963">
    <property type="entry name" value="RIBOSOMAL_S2_2"/>
    <property type="match status" value="1"/>
</dbReference>
<organism>
    <name type="scientific">Citrus sinensis</name>
    <name type="common">Sweet orange</name>
    <name type="synonym">Citrus aurantium var. sinensis</name>
    <dbReference type="NCBI Taxonomy" id="2711"/>
    <lineage>
        <taxon>Eukaryota</taxon>
        <taxon>Viridiplantae</taxon>
        <taxon>Streptophyta</taxon>
        <taxon>Embryophyta</taxon>
        <taxon>Tracheophyta</taxon>
        <taxon>Spermatophyta</taxon>
        <taxon>Magnoliopsida</taxon>
        <taxon>eudicotyledons</taxon>
        <taxon>Gunneridae</taxon>
        <taxon>Pentapetalae</taxon>
        <taxon>rosids</taxon>
        <taxon>malvids</taxon>
        <taxon>Sapindales</taxon>
        <taxon>Rutaceae</taxon>
        <taxon>Aurantioideae</taxon>
        <taxon>Citrus</taxon>
    </lineage>
</organism>
<geneLocation type="chloroplast"/>
<comment type="subcellular location">
    <subcellularLocation>
        <location>Plastid</location>
        <location>Chloroplast</location>
    </subcellularLocation>
</comment>
<comment type="similarity">
    <text evidence="1">Belongs to the universal ribosomal protein uS2 family.</text>
</comment>
<sequence length="236" mass="26809">MARRYWNIHLEEMMEAGIHFGHGTRKWNPRMAPYISAKHKGIHITNLTRTARFLSEACDLVFDAASRGKQFLIVGTKNKAADLVARAAIRARCHYVNQKWLGGMLTNWSTTETRLHKFRDLRTEQKGGRLDSLPKRDAAILKRQLSRLQTYLGGIKYMTRVPDIVIVVDQQEEYTALRECITLGIPTICLIDTNCDPDLADISIPANDDAIASIRLILNKLVFAICEGRSSYIRNP</sequence>
<gene>
    <name type="primary">rps2</name>
</gene>